<feature type="chain" id="PRO_1000005096" description="Small ribosomal subunit protein bS21">
    <location>
        <begin position="1"/>
        <end position="63"/>
    </location>
</feature>
<dbReference type="EMBL" id="CP000139">
    <property type="protein sequence ID" value="ABR38526.1"/>
    <property type="molecule type" value="Genomic_DNA"/>
</dbReference>
<dbReference type="RefSeq" id="WP_005844817.1">
    <property type="nucleotide sequence ID" value="NZ_JANSWM010000035.1"/>
</dbReference>
<dbReference type="SMR" id="A6KYL2"/>
<dbReference type="STRING" id="435590.BVU_0827"/>
<dbReference type="PaxDb" id="435590-BVU_0827"/>
<dbReference type="GeneID" id="93449045"/>
<dbReference type="KEGG" id="bvu:BVU_0827"/>
<dbReference type="eggNOG" id="COG0828">
    <property type="taxonomic scope" value="Bacteria"/>
</dbReference>
<dbReference type="HOGENOM" id="CLU_159258_2_0_10"/>
<dbReference type="BioCyc" id="BVUL435590:G1G59-870-MONOMER"/>
<dbReference type="Proteomes" id="UP000002861">
    <property type="component" value="Chromosome"/>
</dbReference>
<dbReference type="GO" id="GO:1990904">
    <property type="term" value="C:ribonucleoprotein complex"/>
    <property type="evidence" value="ECO:0007669"/>
    <property type="project" value="UniProtKB-KW"/>
</dbReference>
<dbReference type="GO" id="GO:0005840">
    <property type="term" value="C:ribosome"/>
    <property type="evidence" value="ECO:0007669"/>
    <property type="project" value="UniProtKB-KW"/>
</dbReference>
<dbReference type="GO" id="GO:0003735">
    <property type="term" value="F:structural constituent of ribosome"/>
    <property type="evidence" value="ECO:0007669"/>
    <property type="project" value="InterPro"/>
</dbReference>
<dbReference type="GO" id="GO:0006412">
    <property type="term" value="P:translation"/>
    <property type="evidence" value="ECO:0007669"/>
    <property type="project" value="UniProtKB-UniRule"/>
</dbReference>
<dbReference type="Gene3D" id="1.20.5.1150">
    <property type="entry name" value="Ribosomal protein S8"/>
    <property type="match status" value="1"/>
</dbReference>
<dbReference type="HAMAP" id="MF_00358">
    <property type="entry name" value="Ribosomal_bS21"/>
    <property type="match status" value="1"/>
</dbReference>
<dbReference type="InterPro" id="IPR001911">
    <property type="entry name" value="Ribosomal_bS21"/>
</dbReference>
<dbReference type="InterPro" id="IPR038380">
    <property type="entry name" value="Ribosomal_bS21_sf"/>
</dbReference>
<dbReference type="NCBIfam" id="TIGR00030">
    <property type="entry name" value="S21p"/>
    <property type="match status" value="1"/>
</dbReference>
<dbReference type="Pfam" id="PF01165">
    <property type="entry name" value="Ribosomal_S21"/>
    <property type="match status" value="1"/>
</dbReference>
<dbReference type="PRINTS" id="PR00976">
    <property type="entry name" value="RIBOSOMALS21"/>
</dbReference>
<sequence length="63" mass="7526">MIVVPVKEGENIEKALKKFKRKFEKTGVVKELRARQQFDKPSVLNRLKRERAIYVQKLQQVEE</sequence>
<proteinExistence type="inferred from homology"/>
<accession>A6KYL2</accession>
<comment type="similarity">
    <text evidence="1">Belongs to the bacterial ribosomal protein bS21 family.</text>
</comment>
<keyword id="KW-0687">Ribonucleoprotein</keyword>
<keyword id="KW-0689">Ribosomal protein</keyword>
<gene>
    <name evidence="1" type="primary">rpsU</name>
    <name type="ordered locus">BVU_0827</name>
</gene>
<organism>
    <name type="scientific">Phocaeicola vulgatus (strain ATCC 8482 / DSM 1447 / JCM 5826 / CCUG 4940 / NBRC 14291 / NCTC 11154)</name>
    <name type="common">Bacteroides vulgatus</name>
    <dbReference type="NCBI Taxonomy" id="435590"/>
    <lineage>
        <taxon>Bacteria</taxon>
        <taxon>Pseudomonadati</taxon>
        <taxon>Bacteroidota</taxon>
        <taxon>Bacteroidia</taxon>
        <taxon>Bacteroidales</taxon>
        <taxon>Bacteroidaceae</taxon>
        <taxon>Phocaeicola</taxon>
    </lineage>
</organism>
<reference key="1">
    <citation type="journal article" date="2007" name="PLoS Biol.">
        <title>Evolution of symbiotic bacteria in the distal human intestine.</title>
        <authorList>
            <person name="Xu J."/>
            <person name="Mahowald M.A."/>
            <person name="Ley R.E."/>
            <person name="Lozupone C.A."/>
            <person name="Hamady M."/>
            <person name="Martens E.C."/>
            <person name="Henrissat B."/>
            <person name="Coutinho P.M."/>
            <person name="Minx P."/>
            <person name="Latreille P."/>
            <person name="Cordum H."/>
            <person name="Van Brunt A."/>
            <person name="Kim K."/>
            <person name="Fulton R.S."/>
            <person name="Fulton L.A."/>
            <person name="Clifton S.W."/>
            <person name="Wilson R.K."/>
            <person name="Knight R.D."/>
            <person name="Gordon J.I."/>
        </authorList>
    </citation>
    <scope>NUCLEOTIDE SEQUENCE [LARGE SCALE GENOMIC DNA]</scope>
    <source>
        <strain>ATCC 8482 / DSM 1447 / JCM 5826 / CCUG 4940 / NBRC 14291 / NCTC 11154</strain>
    </source>
</reference>
<name>RS21_PHOV8</name>
<evidence type="ECO:0000255" key="1">
    <source>
        <dbReference type="HAMAP-Rule" id="MF_00358"/>
    </source>
</evidence>
<evidence type="ECO:0000305" key="2"/>
<protein>
    <recommendedName>
        <fullName evidence="1">Small ribosomal subunit protein bS21</fullName>
    </recommendedName>
    <alternativeName>
        <fullName evidence="2">30S ribosomal protein S21</fullName>
    </alternativeName>
</protein>